<sequence>MSFRIGHGYDVHKFTSAKQNIIIGGVEIAYHLGLEAHSDGDVLIHALCDAILGALGLGDIGKHFLDTDNQFKNIDSKFFLAEIKKMLDEKQYSISNIDCTIIAQAPKMLPHIEKMRACLANILEIQISQINIKATTTERLGFIGREEGIATHVVCLLYR</sequence>
<organism>
    <name type="scientific">Francisella tularensis subsp. tularensis (strain WY96-3418)</name>
    <dbReference type="NCBI Taxonomy" id="418136"/>
    <lineage>
        <taxon>Bacteria</taxon>
        <taxon>Pseudomonadati</taxon>
        <taxon>Pseudomonadota</taxon>
        <taxon>Gammaproteobacteria</taxon>
        <taxon>Thiotrichales</taxon>
        <taxon>Francisellaceae</taxon>
        <taxon>Francisella</taxon>
    </lineage>
</organism>
<gene>
    <name evidence="1" type="primary">ispF</name>
    <name type="ordered locus">FTW_1161</name>
</gene>
<comment type="function">
    <text evidence="1">Involved in the biosynthesis of isopentenyl diphosphate (IPP) and dimethylallyl diphosphate (DMAPP), two major building blocks of isoprenoid compounds. Catalyzes the conversion of 4-diphosphocytidyl-2-C-methyl-D-erythritol 2-phosphate (CDP-ME2P) to 2-C-methyl-D-erythritol 2,4-cyclodiphosphate (ME-CPP) with a corresponding release of cytidine 5-monophosphate (CMP).</text>
</comment>
<comment type="catalytic activity">
    <reaction evidence="1">
        <text>4-CDP-2-C-methyl-D-erythritol 2-phosphate = 2-C-methyl-D-erythritol 2,4-cyclic diphosphate + CMP</text>
        <dbReference type="Rhea" id="RHEA:23864"/>
        <dbReference type="ChEBI" id="CHEBI:57919"/>
        <dbReference type="ChEBI" id="CHEBI:58483"/>
        <dbReference type="ChEBI" id="CHEBI:60377"/>
        <dbReference type="EC" id="4.6.1.12"/>
    </reaction>
</comment>
<comment type="cofactor">
    <cofactor evidence="1">
        <name>a divalent metal cation</name>
        <dbReference type="ChEBI" id="CHEBI:60240"/>
    </cofactor>
    <text evidence="1">Binds 1 divalent metal cation per subunit.</text>
</comment>
<comment type="pathway">
    <text evidence="1">Isoprenoid biosynthesis; isopentenyl diphosphate biosynthesis via DXP pathway; isopentenyl diphosphate from 1-deoxy-D-xylulose 5-phosphate: step 4/6.</text>
</comment>
<comment type="subunit">
    <text evidence="1">Homotrimer.</text>
</comment>
<comment type="similarity">
    <text evidence="1">Belongs to the IspF family.</text>
</comment>
<protein>
    <recommendedName>
        <fullName evidence="1">2-C-methyl-D-erythritol 2,4-cyclodiphosphate synthase</fullName>
        <shortName evidence="1">MECDP-synthase</shortName>
        <shortName evidence="1">MECPP-synthase</shortName>
        <shortName evidence="1">MECPS</shortName>
        <ecNumber evidence="1">4.6.1.12</ecNumber>
    </recommendedName>
</protein>
<dbReference type="EC" id="4.6.1.12" evidence="1"/>
<dbReference type="EMBL" id="CP000608">
    <property type="protein sequence ID" value="ABO46967.1"/>
    <property type="molecule type" value="Genomic_DNA"/>
</dbReference>
<dbReference type="RefSeq" id="WP_003015413.1">
    <property type="nucleotide sequence ID" value="NC_009257.1"/>
</dbReference>
<dbReference type="SMR" id="A4IYG6"/>
<dbReference type="KEGG" id="ftw:FTW_1161"/>
<dbReference type="HOGENOM" id="CLU_084630_2_0_6"/>
<dbReference type="UniPathway" id="UPA00056">
    <property type="reaction ID" value="UER00095"/>
</dbReference>
<dbReference type="GO" id="GO:0008685">
    <property type="term" value="F:2-C-methyl-D-erythritol 2,4-cyclodiphosphate synthase activity"/>
    <property type="evidence" value="ECO:0007669"/>
    <property type="project" value="UniProtKB-UniRule"/>
</dbReference>
<dbReference type="GO" id="GO:0046872">
    <property type="term" value="F:metal ion binding"/>
    <property type="evidence" value="ECO:0007669"/>
    <property type="project" value="UniProtKB-KW"/>
</dbReference>
<dbReference type="GO" id="GO:0019288">
    <property type="term" value="P:isopentenyl diphosphate biosynthetic process, methylerythritol 4-phosphate pathway"/>
    <property type="evidence" value="ECO:0007669"/>
    <property type="project" value="UniProtKB-UniRule"/>
</dbReference>
<dbReference type="GO" id="GO:0016114">
    <property type="term" value="P:terpenoid biosynthetic process"/>
    <property type="evidence" value="ECO:0007669"/>
    <property type="project" value="InterPro"/>
</dbReference>
<dbReference type="CDD" id="cd00554">
    <property type="entry name" value="MECDP_synthase"/>
    <property type="match status" value="1"/>
</dbReference>
<dbReference type="FunFam" id="3.30.1330.50:FF:000001">
    <property type="entry name" value="2-C-methyl-D-erythritol 2,4-cyclodiphosphate synthase"/>
    <property type="match status" value="1"/>
</dbReference>
<dbReference type="Gene3D" id="3.30.1330.50">
    <property type="entry name" value="2-C-methyl-D-erythritol 2,4-cyclodiphosphate synthase"/>
    <property type="match status" value="1"/>
</dbReference>
<dbReference type="HAMAP" id="MF_00107">
    <property type="entry name" value="IspF"/>
    <property type="match status" value="1"/>
</dbReference>
<dbReference type="InterPro" id="IPR003526">
    <property type="entry name" value="MECDP_synthase"/>
</dbReference>
<dbReference type="InterPro" id="IPR020555">
    <property type="entry name" value="MECDP_synthase_CS"/>
</dbReference>
<dbReference type="InterPro" id="IPR036571">
    <property type="entry name" value="MECDP_synthase_sf"/>
</dbReference>
<dbReference type="NCBIfam" id="TIGR00151">
    <property type="entry name" value="ispF"/>
    <property type="match status" value="1"/>
</dbReference>
<dbReference type="PANTHER" id="PTHR43181">
    <property type="entry name" value="2-C-METHYL-D-ERYTHRITOL 2,4-CYCLODIPHOSPHATE SYNTHASE, CHLOROPLASTIC"/>
    <property type="match status" value="1"/>
</dbReference>
<dbReference type="PANTHER" id="PTHR43181:SF1">
    <property type="entry name" value="2-C-METHYL-D-ERYTHRITOL 2,4-CYCLODIPHOSPHATE SYNTHASE, CHLOROPLASTIC"/>
    <property type="match status" value="1"/>
</dbReference>
<dbReference type="Pfam" id="PF02542">
    <property type="entry name" value="YgbB"/>
    <property type="match status" value="1"/>
</dbReference>
<dbReference type="SUPFAM" id="SSF69765">
    <property type="entry name" value="IpsF-like"/>
    <property type="match status" value="1"/>
</dbReference>
<dbReference type="PROSITE" id="PS01350">
    <property type="entry name" value="ISPF"/>
    <property type="match status" value="1"/>
</dbReference>
<accession>A4IYG6</accession>
<reference key="1">
    <citation type="journal article" date="2007" name="PLoS ONE">
        <title>Complete genomic characterization of a pathogenic A.II strain of Francisella tularensis subspecies tularensis.</title>
        <authorList>
            <person name="Beckstrom-Sternberg S.M."/>
            <person name="Auerbach R.K."/>
            <person name="Godbole S."/>
            <person name="Pearson J.V."/>
            <person name="Beckstrom-Sternberg J.S."/>
            <person name="Deng Z."/>
            <person name="Munk C."/>
            <person name="Kubota K."/>
            <person name="Zhou Y."/>
            <person name="Bruce D."/>
            <person name="Noronha J."/>
            <person name="Scheuermann R.H."/>
            <person name="Wang A."/>
            <person name="Wei X."/>
            <person name="Wang J."/>
            <person name="Hao J."/>
            <person name="Wagner D.M."/>
            <person name="Brettin T.S."/>
            <person name="Brown N."/>
            <person name="Gilna P."/>
            <person name="Keim P.S."/>
        </authorList>
    </citation>
    <scope>NUCLEOTIDE SEQUENCE [LARGE SCALE GENOMIC DNA]</scope>
    <source>
        <strain>WY96-3418</strain>
    </source>
</reference>
<evidence type="ECO:0000255" key="1">
    <source>
        <dbReference type="HAMAP-Rule" id="MF_00107"/>
    </source>
</evidence>
<keyword id="KW-0414">Isoprene biosynthesis</keyword>
<keyword id="KW-0456">Lyase</keyword>
<keyword id="KW-0479">Metal-binding</keyword>
<name>ISPF_FRATW</name>
<feature type="chain" id="PRO_1000022841" description="2-C-methyl-D-erythritol 2,4-cyclodiphosphate synthase">
    <location>
        <begin position="1"/>
        <end position="159"/>
    </location>
</feature>
<feature type="binding site" evidence="1">
    <location>
        <begin position="10"/>
        <end position="12"/>
    </location>
    <ligand>
        <name>4-CDP-2-C-methyl-D-erythritol 2-phosphate</name>
        <dbReference type="ChEBI" id="CHEBI:57919"/>
    </ligand>
</feature>
<feature type="binding site" evidence="1">
    <location>
        <position position="10"/>
    </location>
    <ligand>
        <name>a divalent metal cation</name>
        <dbReference type="ChEBI" id="CHEBI:60240"/>
    </ligand>
</feature>
<feature type="binding site" evidence="1">
    <location>
        <position position="12"/>
    </location>
    <ligand>
        <name>a divalent metal cation</name>
        <dbReference type="ChEBI" id="CHEBI:60240"/>
    </ligand>
</feature>
<feature type="binding site" evidence="1">
    <location>
        <begin position="37"/>
        <end position="38"/>
    </location>
    <ligand>
        <name>4-CDP-2-C-methyl-D-erythritol 2-phosphate</name>
        <dbReference type="ChEBI" id="CHEBI:57919"/>
    </ligand>
</feature>
<feature type="binding site" evidence="1">
    <location>
        <position position="45"/>
    </location>
    <ligand>
        <name>a divalent metal cation</name>
        <dbReference type="ChEBI" id="CHEBI:60240"/>
    </ligand>
</feature>
<feature type="binding site" evidence="1">
    <location>
        <begin position="59"/>
        <end position="61"/>
    </location>
    <ligand>
        <name>4-CDP-2-C-methyl-D-erythritol 2-phosphate</name>
        <dbReference type="ChEBI" id="CHEBI:57919"/>
    </ligand>
</feature>
<feature type="binding site" evidence="1">
    <location>
        <begin position="64"/>
        <end position="68"/>
    </location>
    <ligand>
        <name>4-CDP-2-C-methyl-D-erythritol 2-phosphate</name>
        <dbReference type="ChEBI" id="CHEBI:57919"/>
    </ligand>
</feature>
<feature type="binding site" evidence="1">
    <location>
        <begin position="103"/>
        <end position="109"/>
    </location>
    <ligand>
        <name>4-CDP-2-C-methyl-D-erythritol 2-phosphate</name>
        <dbReference type="ChEBI" id="CHEBI:57919"/>
    </ligand>
</feature>
<feature type="binding site" evidence="1">
    <location>
        <begin position="135"/>
        <end position="138"/>
    </location>
    <ligand>
        <name>4-CDP-2-C-methyl-D-erythritol 2-phosphate</name>
        <dbReference type="ChEBI" id="CHEBI:57919"/>
    </ligand>
</feature>
<feature type="binding site" evidence="1">
    <location>
        <position position="142"/>
    </location>
    <ligand>
        <name>4-CDP-2-C-methyl-D-erythritol 2-phosphate</name>
        <dbReference type="ChEBI" id="CHEBI:57919"/>
    </ligand>
</feature>
<feature type="binding site" evidence="1">
    <location>
        <position position="145"/>
    </location>
    <ligand>
        <name>4-CDP-2-C-methyl-D-erythritol 2-phosphate</name>
        <dbReference type="ChEBI" id="CHEBI:57919"/>
    </ligand>
</feature>
<feature type="site" description="Transition state stabilizer" evidence="1">
    <location>
        <position position="37"/>
    </location>
</feature>
<feature type="site" description="Transition state stabilizer" evidence="1">
    <location>
        <position position="136"/>
    </location>
</feature>
<proteinExistence type="inferred from homology"/>